<protein>
    <recommendedName>
        <fullName evidence="1">Bifunctional protein HldE</fullName>
    </recommendedName>
    <domain>
        <recommendedName>
            <fullName evidence="1">D-beta-D-heptose 7-phosphate kinase</fullName>
            <ecNumber evidence="1">2.7.1.167</ecNumber>
        </recommendedName>
        <alternativeName>
            <fullName evidence="1">D-beta-D-heptose 7-phosphotransferase</fullName>
        </alternativeName>
        <alternativeName>
            <fullName evidence="1">D-glycero-beta-D-manno-heptose-7-phosphate kinase</fullName>
        </alternativeName>
    </domain>
    <domain>
        <recommendedName>
            <fullName evidence="1">D-beta-D-heptose 1-phosphate adenylyltransferase</fullName>
            <ecNumber evidence="1">2.7.7.70</ecNumber>
        </recommendedName>
        <alternativeName>
            <fullName evidence="1">D-glycero-beta-D-manno-heptose 1-phosphate adenylyltransferase</fullName>
        </alternativeName>
    </domain>
</protein>
<reference key="1">
    <citation type="journal article" date="2002" name="Nature">
        <title>Complete genome sequence of the model actinomycete Streptomyces coelicolor A3(2).</title>
        <authorList>
            <person name="Bentley S.D."/>
            <person name="Chater K.F."/>
            <person name="Cerdeno-Tarraga A.-M."/>
            <person name="Challis G.L."/>
            <person name="Thomson N.R."/>
            <person name="James K.D."/>
            <person name="Harris D.E."/>
            <person name="Quail M.A."/>
            <person name="Kieser H."/>
            <person name="Harper D."/>
            <person name="Bateman A."/>
            <person name="Brown S."/>
            <person name="Chandra G."/>
            <person name="Chen C.W."/>
            <person name="Collins M."/>
            <person name="Cronin A."/>
            <person name="Fraser A."/>
            <person name="Goble A."/>
            <person name="Hidalgo J."/>
            <person name="Hornsby T."/>
            <person name="Howarth S."/>
            <person name="Huang C.-H."/>
            <person name="Kieser T."/>
            <person name="Larke L."/>
            <person name="Murphy L.D."/>
            <person name="Oliver K."/>
            <person name="O'Neil S."/>
            <person name="Rabbinowitsch E."/>
            <person name="Rajandream M.A."/>
            <person name="Rutherford K.M."/>
            <person name="Rutter S."/>
            <person name="Seeger K."/>
            <person name="Saunders D."/>
            <person name="Sharp S."/>
            <person name="Squares R."/>
            <person name="Squares S."/>
            <person name="Taylor K."/>
            <person name="Warren T."/>
            <person name="Wietzorrek A."/>
            <person name="Woodward J.R."/>
            <person name="Barrell B.G."/>
            <person name="Parkhill J."/>
            <person name="Hopwood D.A."/>
        </authorList>
    </citation>
    <scope>NUCLEOTIDE SEQUENCE [LARGE SCALE GENOMIC DNA]</scope>
    <source>
        <strain>ATCC BAA-471 / A3(2) / M145</strain>
    </source>
</reference>
<comment type="function">
    <text evidence="1">Catalyzes the phosphorylation of D-glycero-D-manno-heptose 7-phosphate at the C-1 position to selectively form D-glycero-beta-D-manno-heptose-1,7-bisphosphate.</text>
</comment>
<comment type="function">
    <text evidence="1">Catalyzes the ADP transfer from ATP to D-glycero-beta-D-manno-heptose 1-phosphate, yielding ADP-D-glycero-beta-D-manno-heptose.</text>
</comment>
<comment type="catalytic activity">
    <reaction evidence="1">
        <text>D-glycero-beta-D-manno-heptose 7-phosphate + ATP = D-glycero-beta-D-manno-heptose 1,7-bisphosphate + ADP + H(+)</text>
        <dbReference type="Rhea" id="RHEA:27473"/>
        <dbReference type="ChEBI" id="CHEBI:15378"/>
        <dbReference type="ChEBI" id="CHEBI:30616"/>
        <dbReference type="ChEBI" id="CHEBI:60204"/>
        <dbReference type="ChEBI" id="CHEBI:60208"/>
        <dbReference type="ChEBI" id="CHEBI:456216"/>
        <dbReference type="EC" id="2.7.1.167"/>
    </reaction>
</comment>
<comment type="catalytic activity">
    <reaction evidence="1">
        <text>D-glycero-beta-D-manno-heptose 1-phosphate + ATP + H(+) = ADP-D-glycero-beta-D-manno-heptose + diphosphate</text>
        <dbReference type="Rhea" id="RHEA:27465"/>
        <dbReference type="ChEBI" id="CHEBI:15378"/>
        <dbReference type="ChEBI" id="CHEBI:30616"/>
        <dbReference type="ChEBI" id="CHEBI:33019"/>
        <dbReference type="ChEBI" id="CHEBI:59967"/>
        <dbReference type="ChEBI" id="CHEBI:61593"/>
        <dbReference type="EC" id="2.7.7.70"/>
    </reaction>
</comment>
<comment type="pathway">
    <text evidence="1">Nucleotide-sugar biosynthesis; ADP-L-glycero-beta-D-manno-heptose biosynthesis; ADP-L-glycero-beta-D-manno-heptose from D-glycero-beta-D-manno-heptose 7-phosphate: step 1/4.</text>
</comment>
<comment type="pathway">
    <text evidence="1">Nucleotide-sugar biosynthesis; ADP-L-glycero-beta-D-manno-heptose biosynthesis; ADP-L-glycero-beta-D-manno-heptose from D-glycero-beta-D-manno-heptose 7-phosphate: step 3/4.</text>
</comment>
<comment type="subunit">
    <text evidence="1">Homodimer.</text>
</comment>
<comment type="similarity">
    <text evidence="1">In the N-terminal section; belongs to the carbohydrate kinase PfkB family.</text>
</comment>
<comment type="similarity">
    <text evidence="1">In the C-terminal section; belongs to the cytidylyltransferase family.</text>
</comment>
<feature type="chain" id="PRO_0000080128" description="Bifunctional protein HldE">
    <location>
        <begin position="1"/>
        <end position="463"/>
    </location>
</feature>
<feature type="region of interest" description="Ribokinase">
    <location>
        <begin position="1"/>
        <end position="313"/>
    </location>
</feature>
<feature type="region of interest" description="Cytidylyltransferase">
    <location>
        <begin position="331"/>
        <end position="463"/>
    </location>
</feature>
<feature type="active site" evidence="1">
    <location>
        <position position="258"/>
    </location>
</feature>
<proteinExistence type="inferred from homology"/>
<dbReference type="EC" id="2.7.1.167" evidence="1"/>
<dbReference type="EC" id="2.7.7.70" evidence="1"/>
<dbReference type="EMBL" id="AL939126">
    <property type="protein sequence ID" value="CAB36595.1"/>
    <property type="molecule type" value="Genomic_DNA"/>
</dbReference>
<dbReference type="PIR" id="T34841">
    <property type="entry name" value="T34841"/>
</dbReference>
<dbReference type="RefSeq" id="NP_630290.1">
    <property type="nucleotide sequence ID" value="NC_003888.3"/>
</dbReference>
<dbReference type="SMR" id="Q9Z5B5"/>
<dbReference type="STRING" id="100226.gene:17763846"/>
<dbReference type="PaxDb" id="100226-SCO6187"/>
<dbReference type="KEGG" id="sco:SCO6187"/>
<dbReference type="PATRIC" id="fig|100226.15.peg.6297"/>
<dbReference type="eggNOG" id="COG0615">
    <property type="taxonomic scope" value="Bacteria"/>
</dbReference>
<dbReference type="eggNOG" id="COG2870">
    <property type="taxonomic scope" value="Bacteria"/>
</dbReference>
<dbReference type="HOGENOM" id="CLU_021150_1_0_11"/>
<dbReference type="InParanoid" id="Q9Z5B5"/>
<dbReference type="OrthoDB" id="9802794at2"/>
<dbReference type="PhylomeDB" id="Q9Z5B5"/>
<dbReference type="UniPathway" id="UPA00356">
    <property type="reaction ID" value="UER00437"/>
</dbReference>
<dbReference type="UniPathway" id="UPA00356">
    <property type="reaction ID" value="UER00439"/>
</dbReference>
<dbReference type="Proteomes" id="UP000001973">
    <property type="component" value="Chromosome"/>
</dbReference>
<dbReference type="GO" id="GO:0005524">
    <property type="term" value="F:ATP binding"/>
    <property type="evidence" value="ECO:0007669"/>
    <property type="project" value="UniProtKB-UniRule"/>
</dbReference>
<dbReference type="GO" id="GO:0003700">
    <property type="term" value="F:DNA-binding transcription factor activity"/>
    <property type="evidence" value="ECO:0007669"/>
    <property type="project" value="InterPro"/>
</dbReference>
<dbReference type="GO" id="GO:0033785">
    <property type="term" value="F:heptose 7-phosphate kinase activity"/>
    <property type="evidence" value="ECO:0007669"/>
    <property type="project" value="UniProtKB-UniRule"/>
</dbReference>
<dbReference type="GO" id="GO:0033786">
    <property type="term" value="F:heptose-1-phosphate adenylyltransferase activity"/>
    <property type="evidence" value="ECO:0007669"/>
    <property type="project" value="UniProtKB-UniRule"/>
</dbReference>
<dbReference type="GO" id="GO:0016773">
    <property type="term" value="F:phosphotransferase activity, alcohol group as acceptor"/>
    <property type="evidence" value="ECO:0007669"/>
    <property type="project" value="InterPro"/>
</dbReference>
<dbReference type="GO" id="GO:0097171">
    <property type="term" value="P:ADP-L-glycero-beta-D-manno-heptose biosynthetic process"/>
    <property type="evidence" value="ECO:0007669"/>
    <property type="project" value="UniProtKB-UniPathway"/>
</dbReference>
<dbReference type="GO" id="GO:0006352">
    <property type="term" value="P:DNA-templated transcription initiation"/>
    <property type="evidence" value="ECO:0007669"/>
    <property type="project" value="InterPro"/>
</dbReference>
<dbReference type="Gene3D" id="3.40.1190.20">
    <property type="match status" value="1"/>
</dbReference>
<dbReference type="Gene3D" id="3.40.50.620">
    <property type="entry name" value="HUPs"/>
    <property type="match status" value="1"/>
</dbReference>
<dbReference type="HAMAP" id="MF_01603">
    <property type="entry name" value="HldE"/>
    <property type="match status" value="1"/>
</dbReference>
<dbReference type="InterPro" id="IPR050385">
    <property type="entry name" value="Archaeal_FAD_synthase"/>
</dbReference>
<dbReference type="InterPro" id="IPR023030">
    <property type="entry name" value="Bifunc_HldE"/>
</dbReference>
<dbReference type="InterPro" id="IPR004821">
    <property type="entry name" value="Cyt_trans-like"/>
</dbReference>
<dbReference type="InterPro" id="IPR011611">
    <property type="entry name" value="PfkB_dom"/>
</dbReference>
<dbReference type="InterPro" id="IPR011914">
    <property type="entry name" value="RfaE_dom_II"/>
</dbReference>
<dbReference type="InterPro" id="IPR029056">
    <property type="entry name" value="Ribokinase-like"/>
</dbReference>
<dbReference type="InterPro" id="IPR000943">
    <property type="entry name" value="RNA_pol_sigma70"/>
</dbReference>
<dbReference type="InterPro" id="IPR014729">
    <property type="entry name" value="Rossmann-like_a/b/a_fold"/>
</dbReference>
<dbReference type="NCBIfam" id="TIGR00125">
    <property type="entry name" value="cyt_tran_rel"/>
    <property type="match status" value="1"/>
</dbReference>
<dbReference type="NCBIfam" id="TIGR02199">
    <property type="entry name" value="rfaE_dom_II"/>
    <property type="match status" value="1"/>
</dbReference>
<dbReference type="PANTHER" id="PTHR43793:SF2">
    <property type="entry name" value="BIFUNCTIONAL PROTEIN HLDE"/>
    <property type="match status" value="1"/>
</dbReference>
<dbReference type="PANTHER" id="PTHR43793">
    <property type="entry name" value="FAD SYNTHASE"/>
    <property type="match status" value="1"/>
</dbReference>
<dbReference type="Pfam" id="PF01467">
    <property type="entry name" value="CTP_transf_like"/>
    <property type="match status" value="1"/>
</dbReference>
<dbReference type="Pfam" id="PF00294">
    <property type="entry name" value="PfkB"/>
    <property type="match status" value="1"/>
</dbReference>
<dbReference type="SUPFAM" id="SSF52374">
    <property type="entry name" value="Nucleotidylyl transferase"/>
    <property type="match status" value="1"/>
</dbReference>
<dbReference type="SUPFAM" id="SSF53613">
    <property type="entry name" value="Ribokinase-like"/>
    <property type="match status" value="1"/>
</dbReference>
<evidence type="ECO:0000255" key="1">
    <source>
        <dbReference type="HAMAP-Rule" id="MF_01603"/>
    </source>
</evidence>
<accession>Q9Z5B5</accession>
<keyword id="KW-0067">ATP-binding</keyword>
<keyword id="KW-0119">Carbohydrate metabolism</keyword>
<keyword id="KW-0418">Kinase</keyword>
<keyword id="KW-0511">Multifunctional enzyme</keyword>
<keyword id="KW-0547">Nucleotide-binding</keyword>
<keyword id="KW-0548">Nucleotidyltransferase</keyword>
<keyword id="KW-1185">Reference proteome</keyword>
<keyword id="KW-0808">Transferase</keyword>
<gene>
    <name evidence="1" type="primary">hldE</name>
    <name type="synonym">rfaE</name>
    <name type="ordered locus">SCO6187</name>
    <name type="ORF">SC2G5.08</name>
</gene>
<sequence length="463" mass="47193">MTGPMAVRTDRTPLVVVGDALLDRDLTGTADRLAPDAPVPVVQECAERIRPGGAALAAYLAARDGREVTLIAGVGEDPAGLALRELLAPWLKLIPLPLTGTVPEKTRVLAQDRPVVRLDRGGGRVREATDEARDALGCARAVLVSDYGRGAADALRDVLAARPPLVWDPHPRGGPPVPGTRLVTPAEKEAHGFAPSEGRPGGGLRAAALNAAALVRDWRVAAVTVTLGSRGALLSYGEHPLLVPAPAAHHGDSCGAGDRFAATAAGLLADGALVGEAVEGAVGAATAFVAAGGAAAVPPAGSERALAALPDTDDPGALAARIRAEHGTVVAAGGCFDLLHAGHVGLLQAARRLGDCLVVCVNSDASVRRGKGGGRPVNPLADRVRVLRALACVDAVAVFDEDTPERLLGELRPDVWVKGGDYAGADLPEAGLLKEWGGQAVLLPYLDGRSSTALLARAAEGAR</sequence>
<organism>
    <name type="scientific">Streptomyces coelicolor (strain ATCC BAA-471 / A3(2) / M145)</name>
    <dbReference type="NCBI Taxonomy" id="100226"/>
    <lineage>
        <taxon>Bacteria</taxon>
        <taxon>Bacillati</taxon>
        <taxon>Actinomycetota</taxon>
        <taxon>Actinomycetes</taxon>
        <taxon>Kitasatosporales</taxon>
        <taxon>Streptomycetaceae</taxon>
        <taxon>Streptomyces</taxon>
        <taxon>Streptomyces albidoflavus group</taxon>
    </lineage>
</organism>
<name>HLDE_STRCO</name>